<name>CYB_GALSE</name>
<keyword id="KW-0249">Electron transport</keyword>
<keyword id="KW-0349">Heme</keyword>
<keyword id="KW-0408">Iron</keyword>
<keyword id="KW-0472">Membrane</keyword>
<keyword id="KW-0479">Metal-binding</keyword>
<keyword id="KW-0496">Mitochondrion</keyword>
<keyword id="KW-0999">Mitochondrion inner membrane</keyword>
<keyword id="KW-0679">Respiratory chain</keyword>
<keyword id="KW-0812">Transmembrane</keyword>
<keyword id="KW-1133">Transmembrane helix</keyword>
<keyword id="KW-0813">Transport</keyword>
<keyword id="KW-0830">Ubiquinone</keyword>
<reference key="1">
    <citation type="submission" date="2003-10" db="EMBL/GenBank/DDBJ databases">
        <title>61 primate SINEs and the evolution of strepsirrhines.</title>
        <authorList>
            <person name="Roos C."/>
            <person name="Schmitz J."/>
            <person name="Zischler H."/>
        </authorList>
    </citation>
    <scope>NUCLEOTIDE SEQUENCE [GENOMIC DNA]</scope>
</reference>
<accession>Q5VJ42</accession>
<feature type="chain" id="PRO_0000060991" description="Cytochrome b">
    <location>
        <begin position="1"/>
        <end position="379"/>
    </location>
</feature>
<feature type="transmembrane region" description="Helical" evidence="2">
    <location>
        <begin position="33"/>
        <end position="53"/>
    </location>
</feature>
<feature type="transmembrane region" description="Helical" evidence="2">
    <location>
        <begin position="77"/>
        <end position="98"/>
    </location>
</feature>
<feature type="transmembrane region" description="Helical" evidence="2">
    <location>
        <begin position="113"/>
        <end position="133"/>
    </location>
</feature>
<feature type="transmembrane region" description="Helical" evidence="2">
    <location>
        <begin position="178"/>
        <end position="198"/>
    </location>
</feature>
<feature type="transmembrane region" description="Helical" evidence="2">
    <location>
        <begin position="226"/>
        <end position="246"/>
    </location>
</feature>
<feature type="transmembrane region" description="Helical" evidence="2">
    <location>
        <begin position="288"/>
        <end position="308"/>
    </location>
</feature>
<feature type="transmembrane region" description="Helical" evidence="2">
    <location>
        <begin position="320"/>
        <end position="340"/>
    </location>
</feature>
<feature type="transmembrane region" description="Helical" evidence="2">
    <location>
        <begin position="347"/>
        <end position="367"/>
    </location>
</feature>
<feature type="binding site" description="axial binding residue" evidence="2">
    <location>
        <position position="83"/>
    </location>
    <ligand>
        <name>heme b</name>
        <dbReference type="ChEBI" id="CHEBI:60344"/>
        <label>b562</label>
    </ligand>
    <ligandPart>
        <name>Fe</name>
        <dbReference type="ChEBI" id="CHEBI:18248"/>
    </ligandPart>
</feature>
<feature type="binding site" description="axial binding residue" evidence="2">
    <location>
        <position position="97"/>
    </location>
    <ligand>
        <name>heme b</name>
        <dbReference type="ChEBI" id="CHEBI:60344"/>
        <label>b566</label>
    </ligand>
    <ligandPart>
        <name>Fe</name>
        <dbReference type="ChEBI" id="CHEBI:18248"/>
    </ligandPart>
</feature>
<feature type="binding site" description="axial binding residue" evidence="2">
    <location>
        <position position="182"/>
    </location>
    <ligand>
        <name>heme b</name>
        <dbReference type="ChEBI" id="CHEBI:60344"/>
        <label>b562</label>
    </ligand>
    <ligandPart>
        <name>Fe</name>
        <dbReference type="ChEBI" id="CHEBI:18248"/>
    </ligandPart>
</feature>
<feature type="binding site" description="axial binding residue" evidence="2">
    <location>
        <position position="196"/>
    </location>
    <ligand>
        <name>heme b</name>
        <dbReference type="ChEBI" id="CHEBI:60344"/>
        <label>b566</label>
    </ligand>
    <ligandPart>
        <name>Fe</name>
        <dbReference type="ChEBI" id="CHEBI:18248"/>
    </ligandPart>
</feature>
<feature type="binding site" evidence="2">
    <location>
        <position position="201"/>
    </location>
    <ligand>
        <name>a ubiquinone</name>
        <dbReference type="ChEBI" id="CHEBI:16389"/>
    </ligand>
</feature>
<proteinExistence type="inferred from homology"/>
<sequence length="379" mass="42742">MTNIRKQHPLAKMINHSFIDLPAPSNISSWWNFGSLLGLCLMIQIITGLFLAMHYTSDTSTAFSSVTHICRDVNYGWIIRYLHANGASMFFICLFMHIGRGLYYGSFTFLETWNIGIILLFTVMATAFMGYVLPWGQMSFWGATVITNLLSAIPYMGTGLVEWIWGGFSVDKATLTRFFAFHFILPFIIAALAMIHLLFLHETGSNNPSGISSDSDKIPFHPYYTIKDLLGVILLLVSLFSLVLFSPDLLGDPDNYIPANPLNTPPHIKPEWYFLFAYAILRSIPNKLGGVLALVSSILILALIPHLHTAKQQSMMFRPLSQCLYWMLVADLFTLTWIGGQPVENPFITIGQTASIIYFLIILILMPLTNLLENKLLKW</sequence>
<organism>
    <name type="scientific">Galago senegalensis</name>
    <name type="common">Northern lesser bushbaby</name>
    <name type="synonym">Senegal bushbaby</name>
    <dbReference type="NCBI Taxonomy" id="9465"/>
    <lineage>
        <taxon>Eukaryota</taxon>
        <taxon>Metazoa</taxon>
        <taxon>Chordata</taxon>
        <taxon>Craniata</taxon>
        <taxon>Vertebrata</taxon>
        <taxon>Euteleostomi</taxon>
        <taxon>Mammalia</taxon>
        <taxon>Eutheria</taxon>
        <taxon>Euarchontoglires</taxon>
        <taxon>Primates</taxon>
        <taxon>Strepsirrhini</taxon>
        <taxon>Lorisiformes</taxon>
        <taxon>Galagidae</taxon>
        <taxon>Galago</taxon>
    </lineage>
</organism>
<evidence type="ECO:0000250" key="1"/>
<evidence type="ECO:0000250" key="2">
    <source>
        <dbReference type="UniProtKB" id="P00157"/>
    </source>
</evidence>
<evidence type="ECO:0000255" key="3">
    <source>
        <dbReference type="PROSITE-ProRule" id="PRU00967"/>
    </source>
</evidence>
<evidence type="ECO:0000255" key="4">
    <source>
        <dbReference type="PROSITE-ProRule" id="PRU00968"/>
    </source>
</evidence>
<gene>
    <name type="primary">MT-CYB</name>
    <name type="synonym">COB</name>
    <name type="synonym">CYTB</name>
    <name type="synonym">MTCYB</name>
</gene>
<geneLocation type="mitochondrion"/>
<protein>
    <recommendedName>
        <fullName>Cytochrome b</fullName>
    </recommendedName>
    <alternativeName>
        <fullName>Complex III subunit 3</fullName>
    </alternativeName>
    <alternativeName>
        <fullName>Complex III subunit III</fullName>
    </alternativeName>
    <alternativeName>
        <fullName>Cytochrome b-c1 complex subunit 3</fullName>
    </alternativeName>
    <alternativeName>
        <fullName>Ubiquinol-cytochrome-c reductase complex cytochrome b subunit</fullName>
    </alternativeName>
</protein>
<dbReference type="EMBL" id="AY441471">
    <property type="protein sequence ID" value="AAS00152.1"/>
    <property type="molecule type" value="Genomic_DNA"/>
</dbReference>
<dbReference type="SMR" id="Q5VJ42"/>
<dbReference type="GO" id="GO:0005743">
    <property type="term" value="C:mitochondrial inner membrane"/>
    <property type="evidence" value="ECO:0007669"/>
    <property type="project" value="UniProtKB-SubCell"/>
</dbReference>
<dbReference type="GO" id="GO:0045275">
    <property type="term" value="C:respiratory chain complex III"/>
    <property type="evidence" value="ECO:0007669"/>
    <property type="project" value="InterPro"/>
</dbReference>
<dbReference type="GO" id="GO:0046872">
    <property type="term" value="F:metal ion binding"/>
    <property type="evidence" value="ECO:0007669"/>
    <property type="project" value="UniProtKB-KW"/>
</dbReference>
<dbReference type="GO" id="GO:0008121">
    <property type="term" value="F:ubiquinol-cytochrome-c reductase activity"/>
    <property type="evidence" value="ECO:0007669"/>
    <property type="project" value="InterPro"/>
</dbReference>
<dbReference type="GO" id="GO:0006122">
    <property type="term" value="P:mitochondrial electron transport, ubiquinol to cytochrome c"/>
    <property type="evidence" value="ECO:0007669"/>
    <property type="project" value="TreeGrafter"/>
</dbReference>
<dbReference type="CDD" id="cd00290">
    <property type="entry name" value="cytochrome_b_C"/>
    <property type="match status" value="1"/>
</dbReference>
<dbReference type="CDD" id="cd00284">
    <property type="entry name" value="Cytochrome_b_N"/>
    <property type="match status" value="1"/>
</dbReference>
<dbReference type="FunFam" id="1.20.810.10:FF:000002">
    <property type="entry name" value="Cytochrome b"/>
    <property type="match status" value="1"/>
</dbReference>
<dbReference type="Gene3D" id="1.20.810.10">
    <property type="entry name" value="Cytochrome Bc1 Complex, Chain C"/>
    <property type="match status" value="1"/>
</dbReference>
<dbReference type="InterPro" id="IPR005798">
    <property type="entry name" value="Cyt_b/b6_C"/>
</dbReference>
<dbReference type="InterPro" id="IPR036150">
    <property type="entry name" value="Cyt_b/b6_C_sf"/>
</dbReference>
<dbReference type="InterPro" id="IPR005797">
    <property type="entry name" value="Cyt_b/b6_N"/>
</dbReference>
<dbReference type="InterPro" id="IPR027387">
    <property type="entry name" value="Cytb/b6-like_sf"/>
</dbReference>
<dbReference type="InterPro" id="IPR030689">
    <property type="entry name" value="Cytochrome_b"/>
</dbReference>
<dbReference type="InterPro" id="IPR048260">
    <property type="entry name" value="Cytochrome_b_C_euk/bac"/>
</dbReference>
<dbReference type="InterPro" id="IPR048259">
    <property type="entry name" value="Cytochrome_b_N_euk/bac"/>
</dbReference>
<dbReference type="InterPro" id="IPR016174">
    <property type="entry name" value="Di-haem_cyt_TM"/>
</dbReference>
<dbReference type="PANTHER" id="PTHR19271">
    <property type="entry name" value="CYTOCHROME B"/>
    <property type="match status" value="1"/>
</dbReference>
<dbReference type="PANTHER" id="PTHR19271:SF16">
    <property type="entry name" value="CYTOCHROME B"/>
    <property type="match status" value="1"/>
</dbReference>
<dbReference type="Pfam" id="PF00032">
    <property type="entry name" value="Cytochrom_B_C"/>
    <property type="match status" value="1"/>
</dbReference>
<dbReference type="Pfam" id="PF00033">
    <property type="entry name" value="Cytochrome_B"/>
    <property type="match status" value="1"/>
</dbReference>
<dbReference type="PIRSF" id="PIRSF038885">
    <property type="entry name" value="COB"/>
    <property type="match status" value="1"/>
</dbReference>
<dbReference type="SUPFAM" id="SSF81648">
    <property type="entry name" value="a domain/subunit of cytochrome bc1 complex (Ubiquinol-cytochrome c reductase)"/>
    <property type="match status" value="1"/>
</dbReference>
<dbReference type="SUPFAM" id="SSF81342">
    <property type="entry name" value="Transmembrane di-heme cytochromes"/>
    <property type="match status" value="1"/>
</dbReference>
<dbReference type="PROSITE" id="PS51003">
    <property type="entry name" value="CYTB_CTER"/>
    <property type="match status" value="1"/>
</dbReference>
<dbReference type="PROSITE" id="PS51002">
    <property type="entry name" value="CYTB_NTER"/>
    <property type="match status" value="1"/>
</dbReference>
<comment type="function">
    <text evidence="2">Component of the ubiquinol-cytochrome c reductase complex (complex III or cytochrome b-c1 complex) that is part of the mitochondrial respiratory chain. The b-c1 complex mediates electron transfer from ubiquinol to cytochrome c. Contributes to the generation of a proton gradient across the mitochondrial membrane that is then used for ATP synthesis.</text>
</comment>
<comment type="cofactor">
    <cofactor evidence="2">
        <name>heme b</name>
        <dbReference type="ChEBI" id="CHEBI:60344"/>
    </cofactor>
    <text evidence="2">Binds 2 heme b groups non-covalently.</text>
</comment>
<comment type="subunit">
    <text evidence="2">The cytochrome bc1 complex contains 11 subunits: 3 respiratory subunits (MT-CYB, CYC1 and UQCRFS1), 2 core proteins (UQCRC1 and UQCRC2) and 6 low-molecular weight proteins (UQCRH/QCR6, UQCRB/QCR7, UQCRQ/QCR8, UQCR10/QCR9, UQCR11/QCR10 and a cleavage product of UQCRFS1). This cytochrome bc1 complex then forms a dimer.</text>
</comment>
<comment type="subcellular location">
    <subcellularLocation>
        <location evidence="2">Mitochondrion inner membrane</location>
        <topology evidence="2">Multi-pass membrane protein</topology>
    </subcellularLocation>
</comment>
<comment type="miscellaneous">
    <text evidence="1">Heme 1 (or BL or b562) is low-potential and absorbs at about 562 nm, and heme 2 (or BH or b566) is high-potential and absorbs at about 566 nm.</text>
</comment>
<comment type="similarity">
    <text evidence="3 4">Belongs to the cytochrome b family.</text>
</comment>
<comment type="caution">
    <text evidence="2">The full-length protein contains only eight transmembrane helices, not nine as predicted by bioinformatics tools.</text>
</comment>